<comment type="function">
    <text evidence="1">Converts heme B (protoheme IX) to heme O by substitution of the vinyl group on carbon 2 of heme B porphyrin ring with a hydroxyethyl farnesyl side group.</text>
</comment>
<comment type="catalytic activity">
    <reaction evidence="1">
        <text>heme b + (2E,6E)-farnesyl diphosphate + H2O = Fe(II)-heme o + diphosphate</text>
        <dbReference type="Rhea" id="RHEA:28070"/>
        <dbReference type="ChEBI" id="CHEBI:15377"/>
        <dbReference type="ChEBI" id="CHEBI:33019"/>
        <dbReference type="ChEBI" id="CHEBI:60344"/>
        <dbReference type="ChEBI" id="CHEBI:60530"/>
        <dbReference type="ChEBI" id="CHEBI:175763"/>
        <dbReference type="EC" id="2.5.1.141"/>
    </reaction>
</comment>
<comment type="pathway">
    <text evidence="1">Porphyrin-containing compound metabolism; heme O biosynthesis; heme O from protoheme: step 1/1.</text>
</comment>
<comment type="subcellular location">
    <subcellularLocation>
        <location evidence="1">Cell membrane</location>
        <topology evidence="1">Multi-pass membrane protein</topology>
    </subcellularLocation>
</comment>
<comment type="miscellaneous">
    <text evidence="1">Carbon 2 of the heme B porphyrin ring is defined according to the Fischer nomenclature.</text>
</comment>
<comment type="similarity">
    <text evidence="1">Belongs to the UbiA prenyltransferase family. Protoheme IX farnesyltransferase subfamily.</text>
</comment>
<keyword id="KW-1003">Cell membrane</keyword>
<keyword id="KW-0350">Heme biosynthesis</keyword>
<keyword id="KW-0472">Membrane</keyword>
<keyword id="KW-0808">Transferase</keyword>
<keyword id="KW-0812">Transmembrane</keyword>
<keyword id="KW-1133">Transmembrane helix</keyword>
<proteinExistence type="inferred from homology"/>
<sequence>MLKDYLEITKPRIIIGNIILIIGSFLFSSFPFFNVFLFFFTILGTSLVIASSCIFNNLIDIDIDTKMNRTKNRVLVKNLISPTSASIFASFIGIVGFFILGLFVNILSMFLSFIGFVIYVFFYTFFLKRKSMYSTFIGSFSGSIPSVIGHTAISNSIDLFCFLLFIIFIFWQMSHFYAIAILYINDYRKANLPFFPVVKGILKTKKHIFYYITCFIIASSMLTFLGYLSYIFLLFFSFFSFYWLYISYLSIREKDDRKFSSKLFYYSIAVVILFNFLISIDFIF</sequence>
<accession>Q8K997</accession>
<protein>
    <recommendedName>
        <fullName evidence="1">Protoheme IX farnesyltransferase</fullName>
        <ecNumber evidence="1">2.5.1.141</ecNumber>
    </recommendedName>
    <alternativeName>
        <fullName evidence="1">Heme B farnesyltransferase</fullName>
    </alternativeName>
    <alternativeName>
        <fullName evidence="1">Heme O synthase</fullName>
    </alternativeName>
</protein>
<feature type="chain" id="PRO_0000162899" description="Protoheme IX farnesyltransferase">
    <location>
        <begin position="1"/>
        <end position="284"/>
    </location>
</feature>
<feature type="transmembrane region" description="Helical" evidence="1">
    <location>
        <begin position="13"/>
        <end position="33"/>
    </location>
</feature>
<feature type="transmembrane region" description="Helical" evidence="1">
    <location>
        <begin position="35"/>
        <end position="55"/>
    </location>
</feature>
<feature type="transmembrane region" description="Helical" evidence="1">
    <location>
        <begin position="87"/>
        <end position="107"/>
    </location>
</feature>
<feature type="transmembrane region" description="Helical" evidence="1">
    <location>
        <begin position="108"/>
        <end position="128"/>
    </location>
</feature>
<feature type="transmembrane region" description="Helical" evidence="1">
    <location>
        <begin position="133"/>
        <end position="153"/>
    </location>
</feature>
<feature type="transmembrane region" description="Helical" evidence="1">
    <location>
        <begin position="162"/>
        <end position="182"/>
    </location>
</feature>
<feature type="transmembrane region" description="Helical" evidence="1">
    <location>
        <begin position="224"/>
        <end position="244"/>
    </location>
</feature>
<feature type="transmembrane region" description="Helical" evidence="1">
    <location>
        <begin position="264"/>
        <end position="284"/>
    </location>
</feature>
<gene>
    <name evidence="1" type="primary">cyoE</name>
    <name type="ordered locus">BUsg_452</name>
</gene>
<evidence type="ECO:0000255" key="1">
    <source>
        <dbReference type="HAMAP-Rule" id="MF_00154"/>
    </source>
</evidence>
<name>CYOE_BUCAP</name>
<organism>
    <name type="scientific">Buchnera aphidicola subsp. Schizaphis graminum (strain Sg)</name>
    <dbReference type="NCBI Taxonomy" id="198804"/>
    <lineage>
        <taxon>Bacteria</taxon>
        <taxon>Pseudomonadati</taxon>
        <taxon>Pseudomonadota</taxon>
        <taxon>Gammaproteobacteria</taxon>
        <taxon>Enterobacterales</taxon>
        <taxon>Erwiniaceae</taxon>
        <taxon>Buchnera</taxon>
    </lineage>
</organism>
<reference key="1">
    <citation type="journal article" date="2002" name="Science">
        <title>50 million years of genomic stasis in endosymbiotic bacteria.</title>
        <authorList>
            <person name="Tamas I."/>
            <person name="Klasson L."/>
            <person name="Canbaeck B."/>
            <person name="Naeslund A.K."/>
            <person name="Eriksson A.-S."/>
            <person name="Wernegreen J.J."/>
            <person name="Sandstroem J.P."/>
            <person name="Moran N.A."/>
            <person name="Andersson S.G.E."/>
        </authorList>
    </citation>
    <scope>NUCLEOTIDE SEQUENCE [LARGE SCALE GENOMIC DNA]</scope>
    <source>
        <strain>Sg</strain>
    </source>
</reference>
<dbReference type="EC" id="2.5.1.141" evidence="1"/>
<dbReference type="EMBL" id="AE013218">
    <property type="protein sequence ID" value="AAM67995.1"/>
    <property type="molecule type" value="Genomic_DNA"/>
</dbReference>
<dbReference type="RefSeq" id="WP_011053962.1">
    <property type="nucleotide sequence ID" value="NC_004061.1"/>
</dbReference>
<dbReference type="SMR" id="Q8K997"/>
<dbReference type="STRING" id="198804.BUsg_452"/>
<dbReference type="GeneID" id="93003923"/>
<dbReference type="KEGG" id="bas:BUsg_452"/>
<dbReference type="eggNOG" id="COG0109">
    <property type="taxonomic scope" value="Bacteria"/>
</dbReference>
<dbReference type="HOGENOM" id="CLU_029631_0_0_6"/>
<dbReference type="UniPathway" id="UPA00834">
    <property type="reaction ID" value="UER00712"/>
</dbReference>
<dbReference type="Proteomes" id="UP000000416">
    <property type="component" value="Chromosome"/>
</dbReference>
<dbReference type="GO" id="GO:0005886">
    <property type="term" value="C:plasma membrane"/>
    <property type="evidence" value="ECO:0007669"/>
    <property type="project" value="UniProtKB-SubCell"/>
</dbReference>
<dbReference type="GO" id="GO:0008495">
    <property type="term" value="F:protoheme IX farnesyltransferase activity"/>
    <property type="evidence" value="ECO:0007669"/>
    <property type="project" value="UniProtKB-UniRule"/>
</dbReference>
<dbReference type="GO" id="GO:0048034">
    <property type="term" value="P:heme O biosynthetic process"/>
    <property type="evidence" value="ECO:0007669"/>
    <property type="project" value="UniProtKB-UniRule"/>
</dbReference>
<dbReference type="CDD" id="cd13957">
    <property type="entry name" value="PT_UbiA_Cox10"/>
    <property type="match status" value="1"/>
</dbReference>
<dbReference type="Gene3D" id="1.10.357.140">
    <property type="entry name" value="UbiA prenyltransferase"/>
    <property type="match status" value="1"/>
</dbReference>
<dbReference type="HAMAP" id="MF_00154">
    <property type="entry name" value="CyoE_CtaB"/>
    <property type="match status" value="1"/>
</dbReference>
<dbReference type="InterPro" id="IPR006369">
    <property type="entry name" value="Protohaem_IX_farnesylTrfase"/>
</dbReference>
<dbReference type="InterPro" id="IPR000537">
    <property type="entry name" value="UbiA_prenyltransferase"/>
</dbReference>
<dbReference type="InterPro" id="IPR030470">
    <property type="entry name" value="UbiA_prenylTrfase_CS"/>
</dbReference>
<dbReference type="InterPro" id="IPR044878">
    <property type="entry name" value="UbiA_sf"/>
</dbReference>
<dbReference type="NCBIfam" id="TIGR01473">
    <property type="entry name" value="cyoE_ctaB"/>
    <property type="match status" value="1"/>
</dbReference>
<dbReference type="NCBIfam" id="NF003348">
    <property type="entry name" value="PRK04375.1-1"/>
    <property type="match status" value="1"/>
</dbReference>
<dbReference type="PANTHER" id="PTHR43448">
    <property type="entry name" value="PROTOHEME IX FARNESYLTRANSFERASE, MITOCHONDRIAL"/>
    <property type="match status" value="1"/>
</dbReference>
<dbReference type="PANTHER" id="PTHR43448:SF2">
    <property type="entry name" value="PROTOHEME IX FARNESYLTRANSFERASE, MITOCHONDRIAL"/>
    <property type="match status" value="1"/>
</dbReference>
<dbReference type="Pfam" id="PF01040">
    <property type="entry name" value="UbiA"/>
    <property type="match status" value="1"/>
</dbReference>
<dbReference type="PROSITE" id="PS00943">
    <property type="entry name" value="UBIA"/>
    <property type="match status" value="1"/>
</dbReference>